<sequence>SGGFDFSFLPQPPQEKAGVGLGPGPMGLMGPRGPPGASGAPGPQGFQGPAGEPGEPGQTGPAGARGVVGPQGARGFPGTPGLPGFKGIRGYNGLDGLKGQPGAAGVKGEPGAPGENGTPGQTGARGLPGERGRVGAPGPAGSRGSDGSVGPVGPAGPIGSAGPPGFPGAPGPKGELGPVGNTGPSGPAGPRGEQGLPGVSGPVGPPGNPGANGLTGAKGAAGLPGVAGAPGLPGPRGIPGPVGASGATGARGLVGEPGPAGSKGESGGKGEPGSAGPQGPPGSSGEEGKRGPSGESGSTGPTGPPGLRGGPGSRGLPGADGRAGVIGPAGARGASGPAGVRGPSGDTGRPGEPGLMGARGLPGSPGNVGPAGKEGPAGLPGIDGRPGPIGPAGARGEAGNIGFPGPKGPAGDPGKGGEKGHAGLAGNRGAPGPDGNNGAQGPPGLQGVQGGKGEQGPAGPPGFQGLPGPAGTTGEAGKPGERGIPGEFGLPGPAGPRGERGPPGESGAVGPSGAIGSRGPSGPPGPDGNKGEPGVVGAPGTAGPAGSGGLPGERGAAGIPGGKGEKGETGLRGEVGTTGRGAPGAVGAPGPAGATGDRGEAGAAGPAGPAGPRGSPGERGEVGPAGPNGFAGPAGAAGQPGAKGERGTKGPKGENGIVGPTGPVGSAGPAGPNGPAGPAGSRGDGGPPGVTGFPGAAGRTGPPGPSGITGPPGPPGAAGKEGLRGPRGDQGPVGRTGETGAGGPPGFTGEKGPSGEPGTAGPPGTAGPQGLLGAPGILGLPGSRGERGLPGVAGAVGEPGPLGIGPPGARGGRDGNPGSDGPPGRDGLPGHKGERGYAGNPGPVGAAGAPGPHGAVGPAGKHGNRGEPGPVGSAGPVGALGPRGPSGPQGIRGDKGEAGDKGPRGLPGLKGHNGLQGLPGLAGQHGDQGAPGAVGPAGPRGPSGPSGPPGKDGRTGHPGAVGPAGIRGSQGSQGPSGPPGPPGPPGPPGASGGGYDFGYEGDFYRA</sequence>
<proteinExistence type="evidence at protein level"/>
<dbReference type="GO" id="GO:0031012">
    <property type="term" value="C:extracellular matrix"/>
    <property type="evidence" value="ECO:0007669"/>
    <property type="project" value="TreeGrafter"/>
</dbReference>
<dbReference type="GO" id="GO:0005615">
    <property type="term" value="C:extracellular space"/>
    <property type="evidence" value="ECO:0007669"/>
    <property type="project" value="TreeGrafter"/>
</dbReference>
<dbReference type="InterPro" id="IPR008160">
    <property type="entry name" value="Collagen"/>
</dbReference>
<dbReference type="InterPro" id="IPR050149">
    <property type="entry name" value="Collagen_superfamily"/>
</dbReference>
<dbReference type="PANTHER" id="PTHR24023">
    <property type="entry name" value="COLLAGEN ALPHA"/>
    <property type="match status" value="1"/>
</dbReference>
<dbReference type="PANTHER" id="PTHR24023:SF1082">
    <property type="entry name" value="COLLAGEN TRIPLE HELIX REPEAT"/>
    <property type="match status" value="1"/>
</dbReference>
<dbReference type="Pfam" id="PF01391">
    <property type="entry name" value="Collagen"/>
    <property type="match status" value="5"/>
</dbReference>
<reference evidence="5" key="1">
    <citation type="journal article" date="2019" name="Nat. Ecol. Evol.">
        <title>Palaeoproteomics resolves sloth relationships.</title>
        <authorList>
            <person name="Presslee S."/>
            <person name="Slater G.J."/>
            <person name="Pujos F."/>
            <person name="Forasiepi A.M."/>
            <person name="Fischer R."/>
            <person name="Molloy K."/>
            <person name="Mackie M."/>
            <person name="Olsen J.V."/>
            <person name="Kramarz A."/>
            <person name="Taglioretti M."/>
            <person name="Scaglia F."/>
            <person name="Lezcano M."/>
            <person name="Lanata J.L."/>
            <person name="Southon J."/>
            <person name="Feranec R."/>
            <person name="Bloch J."/>
            <person name="Hajduk A."/>
            <person name="Martin F.M."/>
            <person name="Salas Gismondi R."/>
            <person name="Reguero M."/>
            <person name="de Muizon C."/>
            <person name="Greenwood A."/>
            <person name="Chait B.T."/>
            <person name="Penkman K."/>
            <person name="Collins M."/>
            <person name="MacPhee R.D.E."/>
        </authorList>
    </citation>
    <scope>PROTEIN SEQUENCE</scope>
    <scope>TISSUE SPECIFICITY</scope>
    <scope>IDENTIFICATION BY MASS SPECTROMETRY</scope>
    <source>
        <tissue evidence="4">Bone</tissue>
    </source>
</reference>
<evidence type="ECO:0000250" key="1">
    <source>
        <dbReference type="UniProtKB" id="P08123"/>
    </source>
</evidence>
<evidence type="ECO:0000256" key="2">
    <source>
        <dbReference type="SAM" id="MobiDB-lite"/>
    </source>
</evidence>
<evidence type="ECO:0000269" key="3">
    <source>
    </source>
</evidence>
<evidence type="ECO:0000303" key="4">
    <source>
    </source>
</evidence>
<evidence type="ECO:0000305" key="5"/>
<protein>
    <recommendedName>
        <fullName evidence="4">Collagen alpha-2(I) chain</fullName>
    </recommendedName>
    <alternativeName>
        <fullName evidence="1">Alpha-2 type I collagen</fullName>
    </alternativeName>
</protein>
<accession>C0HLG8</accession>
<organism evidence="4">
    <name type="scientific">Choloepus hoffmanni</name>
    <name type="common">Hoffmann's two-fingered sloth</name>
    <dbReference type="NCBI Taxonomy" id="9358"/>
    <lineage>
        <taxon>Eukaryota</taxon>
        <taxon>Metazoa</taxon>
        <taxon>Chordata</taxon>
        <taxon>Craniata</taxon>
        <taxon>Vertebrata</taxon>
        <taxon>Euteleostomi</taxon>
        <taxon>Mammalia</taxon>
        <taxon>Eutheria</taxon>
        <taxon>Xenarthra</taxon>
        <taxon>Pilosa</taxon>
        <taxon>Folivora</taxon>
        <taxon>Megalonychidae</taxon>
        <taxon>Choloepus</taxon>
    </lineage>
</organism>
<name>CO1A2_CHOHO</name>
<feature type="chain" id="PRO_0000448479" description="Collagen alpha-2(I) chain">
    <location>
        <begin position="1"/>
        <end position="1006"/>
    </location>
</feature>
<feature type="region of interest" description="Disordered" evidence="2">
    <location>
        <begin position="1"/>
        <end position="84"/>
    </location>
</feature>
<feature type="region of interest" description="Disordered" evidence="2">
    <location>
        <begin position="99"/>
        <end position="1006"/>
    </location>
</feature>
<feature type="compositionally biased region" description="Low complexity" evidence="2">
    <location>
        <begin position="28"/>
        <end position="64"/>
    </location>
</feature>
<feature type="compositionally biased region" description="Low complexity" evidence="2">
    <location>
        <begin position="142"/>
        <end position="163"/>
    </location>
</feature>
<feature type="compositionally biased region" description="Low complexity" evidence="2">
    <location>
        <begin position="209"/>
        <end position="230"/>
    </location>
</feature>
<feature type="compositionally biased region" description="Gly residues" evidence="2">
    <location>
        <begin position="264"/>
        <end position="273"/>
    </location>
</feature>
<feature type="compositionally biased region" description="Low complexity" evidence="2">
    <location>
        <begin position="274"/>
        <end position="284"/>
    </location>
</feature>
<feature type="compositionally biased region" description="Gly residues" evidence="2">
    <location>
        <begin position="306"/>
        <end position="315"/>
    </location>
</feature>
<feature type="compositionally biased region" description="Low complexity" evidence="2">
    <location>
        <begin position="328"/>
        <end position="344"/>
    </location>
</feature>
<feature type="compositionally biased region" description="Low complexity" evidence="2">
    <location>
        <begin position="379"/>
        <end position="398"/>
    </location>
</feature>
<feature type="compositionally biased region" description="Gly residues" evidence="2">
    <location>
        <begin position="447"/>
        <end position="456"/>
    </location>
</feature>
<feature type="compositionally biased region" description="Low complexity" evidence="2">
    <location>
        <begin position="503"/>
        <end position="520"/>
    </location>
</feature>
<feature type="compositionally biased region" description="Low complexity" evidence="2">
    <location>
        <begin position="532"/>
        <end position="542"/>
    </location>
</feature>
<feature type="compositionally biased region" description="Gly residues" evidence="2">
    <location>
        <begin position="543"/>
        <end position="552"/>
    </location>
</feature>
<feature type="compositionally biased region" description="Low complexity" evidence="2">
    <location>
        <begin position="585"/>
        <end position="615"/>
    </location>
</feature>
<feature type="compositionally biased region" description="Low complexity" evidence="2">
    <location>
        <begin position="622"/>
        <end position="642"/>
    </location>
</feature>
<feature type="compositionally biased region" description="Basic and acidic residues" evidence="2">
    <location>
        <begin position="643"/>
        <end position="652"/>
    </location>
</feature>
<feature type="compositionally biased region" description="Low complexity" evidence="2">
    <location>
        <begin position="660"/>
        <end position="670"/>
    </location>
</feature>
<feature type="compositionally biased region" description="Gly residues" evidence="2">
    <location>
        <begin position="680"/>
        <end position="689"/>
    </location>
</feature>
<feature type="compositionally biased region" description="Low complexity" evidence="2">
    <location>
        <begin position="691"/>
        <end position="700"/>
    </location>
</feature>
<feature type="compositionally biased region" description="Gly residues" evidence="2">
    <location>
        <begin position="737"/>
        <end position="746"/>
    </location>
</feature>
<feature type="compositionally biased region" description="Low complexity" evidence="2">
    <location>
        <begin position="754"/>
        <end position="781"/>
    </location>
</feature>
<feature type="compositionally biased region" description="Low complexity" evidence="2">
    <location>
        <begin position="789"/>
        <end position="799"/>
    </location>
</feature>
<feature type="compositionally biased region" description="Gly residues" evidence="2">
    <location>
        <begin position="800"/>
        <end position="810"/>
    </location>
</feature>
<feature type="compositionally biased region" description="Low complexity" evidence="2">
    <location>
        <begin position="837"/>
        <end position="882"/>
    </location>
</feature>
<feature type="compositionally biased region" description="Basic and acidic residues" evidence="2">
    <location>
        <begin position="892"/>
        <end position="903"/>
    </location>
</feature>
<feature type="compositionally biased region" description="Pro residues" evidence="2">
    <location>
        <begin position="976"/>
        <end position="988"/>
    </location>
</feature>
<feature type="modified residue" description="4-hydroxyproline" evidence="1">
    <location>
        <position position="10"/>
    </location>
</feature>
<feature type="modified residue" description="4-hydroxyproline" evidence="1">
    <location>
        <position position="13"/>
    </location>
</feature>
<feature type="modified residue" description="4-hydroxyproline" evidence="1">
    <location>
        <position position="35"/>
    </location>
</feature>
<feature type="modified residue" description="4-hydroxyproline" evidence="1">
    <location>
        <position position="41"/>
    </location>
</feature>
<feature type="modified residue" description="5-hydroxylysine; alternate" evidence="1">
    <location>
        <position position="86"/>
    </location>
</feature>
<feature type="modified residue" description="4-hydroxyproline" evidence="1">
    <location>
        <position position="350"/>
    </location>
</feature>
<feature type="modified residue" description="4-hydroxyproline" evidence="1">
    <location>
        <position position="353"/>
    </location>
</feature>
<feature type="glycosylation site" description="O-linked (Gal...) hydroxylysine; alternate" evidence="1">
    <location>
        <position position="86"/>
    </location>
</feature>
<feature type="unsure residue" description="L or I" evidence="4">
    <location>
        <position position="9"/>
    </location>
</feature>
<feature type="unsure residue" description="L or I" evidence="4">
    <location>
        <position position="21"/>
    </location>
</feature>
<feature type="unsure residue" description="L or I" evidence="4">
    <location>
        <position position="28"/>
    </location>
</feature>
<feature type="unsure residue" description="L or I" evidence="4">
    <location>
        <position position="82"/>
    </location>
</feature>
<feature type="unsure residue" description="L or I" evidence="4">
    <location>
        <position position="94"/>
    </location>
</feature>
<feature type="unsure residue" description="L or I" evidence="4">
    <location>
        <position position="97"/>
    </location>
</feature>
<feature type="unsure residue" description="L or I" evidence="4">
    <location>
        <position position="127"/>
    </location>
</feature>
<feature type="unsure residue" description="L or I" evidence="4">
    <location>
        <position position="176"/>
    </location>
</feature>
<feature type="unsure residue" description="L or I" evidence="4">
    <location>
        <position position="196"/>
    </location>
</feature>
<feature type="unsure residue" description="L or I" evidence="4">
    <location>
        <position position="214"/>
    </location>
</feature>
<feature type="unsure residue" description="L or I" evidence="4">
    <location>
        <position position="223"/>
    </location>
</feature>
<feature type="unsure residue" description="L or I" evidence="4">
    <location>
        <position position="232"/>
    </location>
</feature>
<feature type="unsure residue" description="L or I" evidence="4">
    <location>
        <position position="253"/>
    </location>
</feature>
<feature type="unsure residue" description="L or I" evidence="4">
    <location>
        <position position="307"/>
    </location>
</feature>
<feature type="unsure residue" description="L or I" evidence="4">
    <location>
        <position position="316"/>
    </location>
</feature>
<feature type="unsure residue" description="L or I" evidence="4">
    <location>
        <position position="355"/>
    </location>
</feature>
<feature type="unsure residue" description="L or I" evidence="4">
    <location>
        <position position="361"/>
    </location>
</feature>
<feature type="unsure residue" description="L or I" evidence="4">
    <location>
        <position position="379"/>
    </location>
</feature>
<feature type="unsure residue" description="L or I" evidence="4">
    <location>
        <position position="424"/>
    </location>
</feature>
<feature type="unsure residue" description="L or I" evidence="4">
    <location>
        <position position="445"/>
    </location>
</feature>
<feature type="unsure residue" description="L or I" evidence="4">
    <location>
        <position position="466"/>
    </location>
</feature>
<feature type="unsure residue" description="L or I" evidence="4">
    <location>
        <position position="490"/>
    </location>
</feature>
<feature type="unsure residue" description="L or I" evidence="4">
    <location>
        <position position="550"/>
    </location>
</feature>
<feature type="unsure residue" description="L or I" evidence="4">
    <location>
        <position position="571"/>
    </location>
</feature>
<feature type="unsure residue" description="L or I" evidence="4">
    <location>
        <position position="723"/>
    </location>
</feature>
<feature type="unsure residue" description="L or I" evidence="4">
    <location>
        <position position="771"/>
    </location>
</feature>
<feature type="unsure residue" description="L or I" evidence="4">
    <location>
        <position position="772"/>
    </location>
</feature>
<feature type="unsure residue" description="L or I" evidence="4">
    <location>
        <position position="778"/>
    </location>
</feature>
<feature type="unsure residue" description="L or I" evidence="4">
    <location>
        <position position="780"/>
    </location>
</feature>
<feature type="unsure residue" description="L or I" evidence="4">
    <location>
        <position position="789"/>
    </location>
</feature>
<feature type="unsure residue" description="L or I" evidence="4">
    <location>
        <position position="802"/>
    </location>
</feature>
<feature type="unsure residue" description="L or I" evidence="4">
    <location>
        <position position="828"/>
    </location>
</feature>
<feature type="unsure residue" description="L or I" evidence="4">
    <location>
        <position position="880"/>
    </location>
</feature>
<feature type="unsure residue" description="L or I" evidence="4">
    <location>
        <position position="906"/>
    </location>
</feature>
<feature type="unsure residue" description="L or I" evidence="4">
    <location>
        <position position="909"/>
    </location>
</feature>
<feature type="unsure residue" description="L or I" evidence="4">
    <location>
        <position position="915"/>
    </location>
</feature>
<feature type="unsure residue" description="L or I" evidence="4">
    <location>
        <position position="918"/>
    </location>
</feature>
<feature type="unsure residue" description="L or I" evidence="4">
    <location>
        <position position="921"/>
    </location>
</feature>
<feature type="non-consecutive residues" evidence="4">
    <location>
        <begin position="17"/>
        <end position="18"/>
    </location>
</feature>
<feature type="non-consecutive residues" evidence="4">
    <location>
        <begin position="65"/>
        <end position="66"/>
    </location>
</feature>
<feature type="non-consecutive residues" evidence="4">
    <location>
        <begin position="580"/>
        <end position="581"/>
    </location>
</feature>
<feature type="non-consecutive residues" evidence="4">
    <location>
        <begin position="804"/>
        <end position="805"/>
    </location>
</feature>
<feature type="non-consecutive residues" evidence="4">
    <location>
        <begin position="811"/>
        <end position="812"/>
    </location>
</feature>
<feature type="non-terminal residue" evidence="4">
    <location>
        <position position="1"/>
    </location>
</feature>
<feature type="non-terminal residue" evidence="4">
    <location>
        <position position="1006"/>
    </location>
</feature>
<keyword id="KW-0903">Direct protein sequencing</keyword>
<keyword id="KW-0272">Extracellular matrix</keyword>
<keyword id="KW-0325">Glycoprotein</keyword>
<keyword id="KW-0379">Hydroxylation</keyword>
<keyword id="KW-0964">Secreted</keyword>
<comment type="function">
    <text evidence="5">Type I collagen is a member of group I collagen (fibrillar forming collagen).</text>
</comment>
<comment type="subunit">
    <text evidence="1">Trimers of one alpha 2(I) and two alpha 1(I) chains. Interacts (via C-terminus) with TMEM131 (via PapD-L domain); the interaction is direct and is involved in assembly and TRAPPIII ER-to-Golgi transport complex-dependent secretion of collagen.</text>
</comment>
<comment type="subcellular location">
    <subcellularLocation>
        <location>Secreted</location>
    </subcellularLocation>
    <subcellularLocation>
        <location>Secreted</location>
        <location>Extracellular space</location>
    </subcellularLocation>
    <subcellularLocation>
        <location evidence="5">Secreted</location>
        <location evidence="5">Extracellular space</location>
        <location evidence="5">Extracellular matrix</location>
    </subcellularLocation>
</comment>
<comment type="tissue specificity">
    <text evidence="3">Expressed in bones.</text>
</comment>
<comment type="PTM">
    <text evidence="1">Prolines at the third position of the tripeptide repeating unit (G-X-Y) are hydroxylated in some or all of the chains.</text>
</comment>
<comment type="similarity">
    <text evidence="5">Belongs to the fibrillar collagen family.</text>
</comment>